<organism>
    <name type="scientific">Jembrana disease virus</name>
    <name type="common">JDV</name>
    <dbReference type="NCBI Taxonomy" id="36370"/>
    <lineage>
        <taxon>Viruses</taxon>
        <taxon>Riboviria</taxon>
        <taxon>Pararnavirae</taxon>
        <taxon>Artverviricota</taxon>
        <taxon>Revtraviricetes</taxon>
        <taxon>Ortervirales</taxon>
        <taxon>Retroviridae</taxon>
        <taxon>Orthoretrovirinae</taxon>
        <taxon>Lentivirus</taxon>
    </lineage>
</organism>
<accession>Q82850</accession>
<feature type="chain" id="PRO_0000272349" description="Gag polyprotein">
    <location>
        <begin position="1"/>
        <end position="436"/>
    </location>
</feature>
<feature type="chain" id="PRO_0000272350" description="Matrix protein p16" evidence="2">
    <location>
        <begin position="1"/>
        <end position="125"/>
    </location>
</feature>
<feature type="chain" id="PRO_0000272351" description="Capsid protein p26" evidence="2">
    <location>
        <begin position="126"/>
        <end position="344"/>
    </location>
</feature>
<feature type="chain" id="PRO_0000272352" description="Nucleocapsid protein p13" evidence="2">
    <location>
        <begin position="345"/>
        <end position="436"/>
    </location>
</feature>
<feature type="zinc finger region" description="CCHC-type 1" evidence="3">
    <location>
        <begin position="368"/>
        <end position="385"/>
    </location>
</feature>
<feature type="zinc finger region" description="CCHC-type 2" evidence="3">
    <location>
        <begin position="386"/>
        <end position="403"/>
    </location>
</feature>
<feature type="region of interest" description="Disordered" evidence="4">
    <location>
        <begin position="400"/>
        <end position="436"/>
    </location>
</feature>
<feature type="short sequence motif" description="PTAP/PSAP motif">
    <location>
        <begin position="428"/>
        <end position="431"/>
    </location>
</feature>
<feature type="compositionally biased region" description="Polar residues" evidence="4">
    <location>
        <begin position="408"/>
        <end position="428"/>
    </location>
</feature>
<feature type="site" description="Cleavage; by viral protease" evidence="2">
    <location>
        <begin position="125"/>
        <end position="126"/>
    </location>
</feature>
<feature type="site" description="Cleavage; by viral protease" evidence="2">
    <location>
        <begin position="344"/>
        <end position="345"/>
    </location>
</feature>
<reference key="1">
    <citation type="journal article" date="1995" name="J. Gen. Virol.">
        <title>Nucleotide sequence analysis of Jembrana disease virus: a bovine lentivirus associated with an acute disease syndrome.</title>
        <authorList>
            <person name="Chadwick B.J."/>
            <person name="Coelen R.J."/>
            <person name="Wilcox G.E."/>
            <person name="Sammels L.M."/>
            <person name="Kertayadnya G."/>
        </authorList>
    </citation>
    <scope>NUCLEOTIDE SEQUENCE [GENOMIC RNA]</scope>
    <source>
        <strain>Tabanan/87</strain>
    </source>
</reference>
<dbReference type="EMBL" id="U21603">
    <property type="protein sequence ID" value="AAA64388.1"/>
    <property type="molecule type" value="Genomic_RNA"/>
</dbReference>
<dbReference type="RefSeq" id="NP_042684.1">
    <molecule id="Q82850-1"/>
    <property type="nucleotide sequence ID" value="NC_001654.1"/>
</dbReference>
<dbReference type="SMR" id="Q82850"/>
<dbReference type="GeneID" id="1497399"/>
<dbReference type="Proteomes" id="UP000246436">
    <property type="component" value="Genome"/>
</dbReference>
<dbReference type="GO" id="GO:0019013">
    <property type="term" value="C:viral nucleocapsid"/>
    <property type="evidence" value="ECO:0007669"/>
    <property type="project" value="UniProtKB-KW"/>
</dbReference>
<dbReference type="GO" id="GO:0003676">
    <property type="term" value="F:nucleic acid binding"/>
    <property type="evidence" value="ECO:0007669"/>
    <property type="project" value="InterPro"/>
</dbReference>
<dbReference type="GO" id="GO:0039660">
    <property type="term" value="F:structural constituent of virion"/>
    <property type="evidence" value="ECO:0007669"/>
    <property type="project" value="UniProtKB-KW"/>
</dbReference>
<dbReference type="GO" id="GO:0008270">
    <property type="term" value="F:zinc ion binding"/>
    <property type="evidence" value="ECO:0007669"/>
    <property type="project" value="UniProtKB-KW"/>
</dbReference>
<dbReference type="GO" id="GO:0039702">
    <property type="term" value="P:viral budding via host ESCRT complex"/>
    <property type="evidence" value="ECO:0007669"/>
    <property type="project" value="UniProtKB-KW"/>
</dbReference>
<dbReference type="GO" id="GO:0075523">
    <property type="term" value="P:viral translational frameshifting"/>
    <property type="evidence" value="ECO:0007669"/>
    <property type="project" value="UniProtKB-KW"/>
</dbReference>
<dbReference type="Gene3D" id="1.10.1200.30">
    <property type="match status" value="1"/>
</dbReference>
<dbReference type="Gene3D" id="1.10.375.10">
    <property type="entry name" value="Human Immunodeficiency Virus Type 1 Capsid Protein"/>
    <property type="match status" value="1"/>
</dbReference>
<dbReference type="Gene3D" id="1.10.150.90">
    <property type="entry name" value="Immunodeficiency lentiviruses, gag gene matrix protein p17"/>
    <property type="match status" value="1"/>
</dbReference>
<dbReference type="Gene3D" id="4.10.60.10">
    <property type="entry name" value="Zinc finger, CCHC-type"/>
    <property type="match status" value="1"/>
</dbReference>
<dbReference type="InterPro" id="IPR045345">
    <property type="entry name" value="Gag_p24_C"/>
</dbReference>
<dbReference type="InterPro" id="IPR012344">
    <property type="entry name" value="Matrix_HIV/RSV_N"/>
</dbReference>
<dbReference type="InterPro" id="IPR050195">
    <property type="entry name" value="Primate_lentivir_Gag_pol-like"/>
</dbReference>
<dbReference type="InterPro" id="IPR008916">
    <property type="entry name" value="Retrov_capsid_C"/>
</dbReference>
<dbReference type="InterPro" id="IPR008919">
    <property type="entry name" value="Retrov_capsid_N"/>
</dbReference>
<dbReference type="InterPro" id="IPR001878">
    <property type="entry name" value="Znf_CCHC"/>
</dbReference>
<dbReference type="InterPro" id="IPR036875">
    <property type="entry name" value="Znf_CCHC_sf"/>
</dbReference>
<dbReference type="PANTHER" id="PTHR40389">
    <property type="entry name" value="ENDOGENOUS RETROVIRUS GROUP K MEMBER 24 GAG POLYPROTEIN-RELATED"/>
    <property type="match status" value="1"/>
</dbReference>
<dbReference type="PANTHER" id="PTHR40389:SF3">
    <property type="entry name" value="IGE-BINDING PROTEIN"/>
    <property type="match status" value="1"/>
</dbReference>
<dbReference type="Pfam" id="PF19317">
    <property type="entry name" value="Gag_p24_C"/>
    <property type="match status" value="1"/>
</dbReference>
<dbReference type="Pfam" id="PF00098">
    <property type="entry name" value="zf-CCHC"/>
    <property type="match status" value="2"/>
</dbReference>
<dbReference type="SMART" id="SM00343">
    <property type="entry name" value="ZnF_C2HC"/>
    <property type="match status" value="2"/>
</dbReference>
<dbReference type="SUPFAM" id="SSF47353">
    <property type="entry name" value="Retrovirus capsid dimerization domain-like"/>
    <property type="match status" value="1"/>
</dbReference>
<dbReference type="SUPFAM" id="SSF47943">
    <property type="entry name" value="Retrovirus capsid protein, N-terminal core domain"/>
    <property type="match status" value="1"/>
</dbReference>
<dbReference type="SUPFAM" id="SSF57756">
    <property type="entry name" value="Retrovirus zinc finger-like domains"/>
    <property type="match status" value="1"/>
</dbReference>
<dbReference type="PROSITE" id="PS50158">
    <property type="entry name" value="ZF_CCHC"/>
    <property type="match status" value="2"/>
</dbReference>
<evidence type="ECO:0000250" key="1"/>
<evidence type="ECO:0000255" key="2"/>
<evidence type="ECO:0000255" key="3">
    <source>
        <dbReference type="PROSITE-ProRule" id="PRU00047"/>
    </source>
</evidence>
<evidence type="ECO:0000256" key="4">
    <source>
        <dbReference type="SAM" id="MobiDB-lite"/>
    </source>
</evidence>
<evidence type="ECO:0000305" key="5"/>
<keyword id="KW-0167">Capsid protein</keyword>
<keyword id="KW-0945">Host-virus interaction</keyword>
<keyword id="KW-0479">Metal-binding</keyword>
<keyword id="KW-1185">Reference proteome</keyword>
<keyword id="KW-0677">Repeat</keyword>
<keyword id="KW-0688">Ribosomal frameshifting</keyword>
<keyword id="KW-1198">Viral budding</keyword>
<keyword id="KW-1187">Viral budding via the host ESCRT complexes</keyword>
<keyword id="KW-0468">Viral matrix protein</keyword>
<keyword id="KW-0543">Viral nucleoprotein</keyword>
<keyword id="KW-1188">Viral release from host cell</keyword>
<keyword id="KW-0946">Virion</keyword>
<keyword id="KW-0917">Virion maturation</keyword>
<keyword id="KW-0862">Zinc</keyword>
<keyword id="KW-0863">Zinc-finger</keyword>
<comment type="function">
    <text evidence="1">Matrix protein p16 forms the outer shell of the core of the virus, lining the inner surface of the viral membrane.</text>
</comment>
<comment type="function">
    <text evidence="1">Capsid protein p26 forms the conical core of the virus that encapsulates the genomic RNA-nucleocapsid complex.</text>
</comment>
<comment type="function">
    <text evidence="1">Nucleocapsid protein p13 encapsulates and protects viral dimeric unspliced (genomic) RNA. Binds these RNAs through its zinc fingers (By similarity).</text>
</comment>
<comment type="subcellular location">
    <molecule>Matrix protein p16</molecule>
    <subcellularLocation>
        <location evidence="5">Virion</location>
    </subcellularLocation>
</comment>
<comment type="subcellular location">
    <molecule>Capsid protein p26</molecule>
    <subcellularLocation>
        <location evidence="5">Virion</location>
    </subcellularLocation>
</comment>
<comment type="subcellular location">
    <molecule>Nucleocapsid protein p13</molecule>
    <subcellularLocation>
        <location evidence="5">Virion</location>
    </subcellularLocation>
</comment>
<comment type="alternative products">
    <event type="ribosomal frameshifting"/>
    <isoform>
        <id>Q82850-1</id>
        <name>Gag polyprotein</name>
        <sequence type="displayed"/>
    </isoform>
    <isoform>
        <id>Q82851-1</id>
        <name>Gag-Pol polyprotein</name>
        <sequence type="external"/>
    </isoform>
    <text>This strategy of translation probably allows the virus to modulate the quantity of each viral protein.</text>
</comment>
<comment type="domain">
    <text evidence="1">Late-budding domains (L domains) are short sequence motifs essential for viral particle budding. They recruit proteins of the host ESCRT machinery (Endosomal Sorting Complex Required for Transport) or ESCRT-associated proteins. Nucleocapsid protein p13 contains one L domain: a PTAP/PSAP motif, which interacts with the UEV domain of TSG101 (By similarity).</text>
</comment>
<comment type="miscellaneous">
    <molecule>Isoform Gag polyprotein</molecule>
    <text>Produced by conventional translation.</text>
</comment>
<comment type="similarity">
    <text evidence="5">Belongs to the bovine lentivirus group gag polyprotein family.</text>
</comment>
<gene>
    <name type="primary">gag</name>
</gene>
<protein>
    <recommendedName>
        <fullName>Gag polyprotein</fullName>
    </recommendedName>
    <alternativeName>
        <fullName>Pr53Gag</fullName>
    </alternativeName>
    <component>
        <recommendedName>
            <fullName>Matrix protein p16</fullName>
            <shortName>MA</shortName>
        </recommendedName>
    </component>
    <component>
        <recommendedName>
            <fullName>Capsid protein p26</fullName>
            <shortName>CA</shortName>
        </recommendedName>
    </component>
    <component>
        <recommendedName>
            <fullName>Nucleocapsid protein p13</fullName>
            <shortName>NC</shortName>
        </recommendedName>
    </component>
</protein>
<organismHost>
    <name type="scientific">Bos javanicus</name>
    <name type="common">Wild banteng</name>
    <dbReference type="NCBI Taxonomy" id="9906"/>
</organismHost>
<name>GAG_JEMBR</name>
<proteinExistence type="inferred from homology"/>
<sequence length="436" mass="48785">MKLSKLEKALKKVRVTPQRDDTYTIGNVLWAIRMCRLMGLDCCIDEATAAEVAILIGRFQSLDLQDSPLKGKDEKAILTTLKVLWSLLAGHHPENSDMAEKYWEAWTIRERESQKEEEGEITSIYPQLRKNFPAVSTSDGSPRYDPDLTKQLKIWADATEKHGVDHHAVNILGVITANLTQSEIRLLLQSTPQWRLDIQLIESKLNAREHAHRVWKESHPEAPKTDEIIGKGLTAAEQATLTTQECRDTYRQWVLEAALEVAQGKHDRPGPINIHQGPKEPYPEFVNKLVTALEGMAAPETTKQYLLDHLSVDHANEDCRAVLLPLGPSAPMERKLEACRAVGSSKQKMQFLAEAFAAINVKGDGEVQRCYGCGKPGHIRRDCKNQKCFKCGKPGHLQRNCKSKNGRRSSAPSGQRSGYHQEKTSVTPSAPPLVLD</sequence>